<sequence length="248" mass="27484">MNLFFSAPPLVAELEVGHHLYWHLGKFTVHGQVLIASWIAIALILTVVLLGTRQLQREPAGLQNFIEYTLEFVQSIARAQIGEKNFRPWVPYVGTLFLFIFVSNWMGNLFPWKLIPLPEGELASPTNDINTTAGLALLTSVMYFVAGISKRGLSYFKKYIEPTPVLLPINVLEDFTKPLSLSFRLFGNILAEELVIAVLVLLVPLLIPVPVMILFLFTGAIQALIFSTLSAAYIGEALEGHGGGDHHD</sequence>
<proteinExistence type="inferred from homology"/>
<reference key="1">
    <citation type="journal article" date="2007" name="ISME J.">
        <title>Population level functional diversity in a microbial community revealed by comparative genomic and metagenomic analyses.</title>
        <authorList>
            <person name="Bhaya D."/>
            <person name="Grossman A.R."/>
            <person name="Steunou A.-S."/>
            <person name="Khuri N."/>
            <person name="Cohan F.M."/>
            <person name="Hamamura N."/>
            <person name="Melendrez M.C."/>
            <person name="Bateson M.M."/>
            <person name="Ward D.M."/>
            <person name="Heidelberg J.F."/>
        </authorList>
    </citation>
    <scope>NUCLEOTIDE SEQUENCE [LARGE SCALE GENOMIC DNA]</scope>
    <source>
        <strain>JA-3-3Ab</strain>
    </source>
</reference>
<name>ATP6_SYNJA</name>
<comment type="function">
    <text evidence="1">Key component of the proton channel; it plays a direct role in the translocation of protons across the membrane.</text>
</comment>
<comment type="subunit">
    <text evidence="1">F-type ATPases have 2 components, CF(1) - the catalytic core - and CF(0) - the membrane proton channel. CF(1) has five subunits: alpha(3), beta(3), gamma(1), delta(1), epsilon(1). CF(0) has four main subunits: a, b, b' and c.</text>
</comment>
<comment type="subcellular location">
    <subcellularLocation>
        <location evidence="1">Cellular thylakoid membrane</location>
        <topology evidence="1">Multi-pass membrane protein</topology>
    </subcellularLocation>
</comment>
<comment type="similarity">
    <text evidence="1">Belongs to the ATPase A chain family.</text>
</comment>
<gene>
    <name evidence="1" type="primary">atpB</name>
    <name evidence="1" type="synonym">atpI</name>
    <name type="ordered locus">CYA_2119</name>
</gene>
<organism>
    <name type="scientific">Synechococcus sp. (strain JA-3-3Ab)</name>
    <name type="common">Cyanobacteria bacterium Yellowstone A-Prime</name>
    <dbReference type="NCBI Taxonomy" id="321327"/>
    <lineage>
        <taxon>Bacteria</taxon>
        <taxon>Bacillati</taxon>
        <taxon>Cyanobacteriota</taxon>
        <taxon>Cyanophyceae</taxon>
        <taxon>Synechococcales</taxon>
        <taxon>Synechococcaceae</taxon>
        <taxon>Synechococcus</taxon>
    </lineage>
</organism>
<evidence type="ECO:0000255" key="1">
    <source>
        <dbReference type="HAMAP-Rule" id="MF_01393"/>
    </source>
</evidence>
<dbReference type="EMBL" id="CP000239">
    <property type="protein sequence ID" value="ABD00259.1"/>
    <property type="molecule type" value="Genomic_DNA"/>
</dbReference>
<dbReference type="SMR" id="Q2JSV5"/>
<dbReference type="STRING" id="321327.CYA_2119"/>
<dbReference type="KEGG" id="cya:CYA_2119"/>
<dbReference type="eggNOG" id="COG0356">
    <property type="taxonomic scope" value="Bacteria"/>
</dbReference>
<dbReference type="HOGENOM" id="CLU_041018_2_4_3"/>
<dbReference type="Proteomes" id="UP000008818">
    <property type="component" value="Chromosome"/>
</dbReference>
<dbReference type="GO" id="GO:0031676">
    <property type="term" value="C:plasma membrane-derived thylakoid membrane"/>
    <property type="evidence" value="ECO:0007669"/>
    <property type="project" value="UniProtKB-SubCell"/>
</dbReference>
<dbReference type="GO" id="GO:0045259">
    <property type="term" value="C:proton-transporting ATP synthase complex"/>
    <property type="evidence" value="ECO:0007669"/>
    <property type="project" value="UniProtKB-KW"/>
</dbReference>
<dbReference type="GO" id="GO:0046933">
    <property type="term" value="F:proton-transporting ATP synthase activity, rotational mechanism"/>
    <property type="evidence" value="ECO:0007669"/>
    <property type="project" value="UniProtKB-UniRule"/>
</dbReference>
<dbReference type="CDD" id="cd00310">
    <property type="entry name" value="ATP-synt_Fo_a_6"/>
    <property type="match status" value="1"/>
</dbReference>
<dbReference type="FunFam" id="1.20.120.220:FF:000001">
    <property type="entry name" value="ATP synthase subunit a, chloroplastic"/>
    <property type="match status" value="1"/>
</dbReference>
<dbReference type="Gene3D" id="1.20.120.220">
    <property type="entry name" value="ATP synthase, F0 complex, subunit A"/>
    <property type="match status" value="1"/>
</dbReference>
<dbReference type="HAMAP" id="MF_01393">
    <property type="entry name" value="ATP_synth_a_bact"/>
    <property type="match status" value="1"/>
</dbReference>
<dbReference type="InterPro" id="IPR045082">
    <property type="entry name" value="ATP_syn_F0_a_bact/chloroplast"/>
</dbReference>
<dbReference type="InterPro" id="IPR000568">
    <property type="entry name" value="ATP_synth_F0_asu"/>
</dbReference>
<dbReference type="InterPro" id="IPR023011">
    <property type="entry name" value="ATP_synth_F0_asu_AS"/>
</dbReference>
<dbReference type="InterPro" id="IPR035908">
    <property type="entry name" value="F0_ATP_A_sf"/>
</dbReference>
<dbReference type="NCBIfam" id="TIGR01131">
    <property type="entry name" value="ATP_synt_6_or_A"/>
    <property type="match status" value="1"/>
</dbReference>
<dbReference type="PANTHER" id="PTHR42823">
    <property type="entry name" value="ATP SYNTHASE SUBUNIT A, CHLOROPLASTIC"/>
    <property type="match status" value="1"/>
</dbReference>
<dbReference type="PANTHER" id="PTHR42823:SF3">
    <property type="entry name" value="ATP SYNTHASE SUBUNIT A, CHLOROPLASTIC"/>
    <property type="match status" value="1"/>
</dbReference>
<dbReference type="Pfam" id="PF00119">
    <property type="entry name" value="ATP-synt_A"/>
    <property type="match status" value="1"/>
</dbReference>
<dbReference type="PRINTS" id="PR00123">
    <property type="entry name" value="ATPASEA"/>
</dbReference>
<dbReference type="SUPFAM" id="SSF81336">
    <property type="entry name" value="F1F0 ATP synthase subunit A"/>
    <property type="match status" value="1"/>
</dbReference>
<dbReference type="PROSITE" id="PS00449">
    <property type="entry name" value="ATPASE_A"/>
    <property type="match status" value="1"/>
</dbReference>
<accession>Q2JSV5</accession>
<keyword id="KW-0066">ATP synthesis</keyword>
<keyword id="KW-0138">CF(0)</keyword>
<keyword id="KW-0375">Hydrogen ion transport</keyword>
<keyword id="KW-0406">Ion transport</keyword>
<keyword id="KW-0472">Membrane</keyword>
<keyword id="KW-0793">Thylakoid</keyword>
<keyword id="KW-0812">Transmembrane</keyword>
<keyword id="KW-1133">Transmembrane helix</keyword>
<keyword id="KW-0813">Transport</keyword>
<protein>
    <recommendedName>
        <fullName evidence="1">ATP synthase subunit a</fullName>
    </recommendedName>
    <alternativeName>
        <fullName evidence="1">ATP synthase F0 sector subunit a</fullName>
    </alternativeName>
    <alternativeName>
        <fullName evidence="1">F-ATPase subunit 6</fullName>
    </alternativeName>
</protein>
<feature type="chain" id="PRO_0000362489" description="ATP synthase subunit a">
    <location>
        <begin position="1"/>
        <end position="248"/>
    </location>
</feature>
<feature type="transmembrane region" description="Helical" evidence="1">
    <location>
        <begin position="31"/>
        <end position="51"/>
    </location>
</feature>
<feature type="transmembrane region" description="Helical" evidence="1">
    <location>
        <begin position="90"/>
        <end position="110"/>
    </location>
</feature>
<feature type="transmembrane region" description="Helical" evidence="1">
    <location>
        <begin position="129"/>
        <end position="149"/>
    </location>
</feature>
<feature type="transmembrane region" description="Helical" evidence="1">
    <location>
        <begin position="195"/>
        <end position="215"/>
    </location>
</feature>
<feature type="transmembrane region" description="Helical" evidence="1">
    <location>
        <begin position="216"/>
        <end position="236"/>
    </location>
</feature>